<evidence type="ECO:0000255" key="1">
    <source>
        <dbReference type="HAMAP-Rule" id="MF_00255"/>
    </source>
</evidence>
<dbReference type="EC" id="6.1.1.14" evidence="1"/>
<dbReference type="EMBL" id="CP000851">
    <property type="protein sequence ID" value="ABV85335.1"/>
    <property type="molecule type" value="Genomic_DNA"/>
</dbReference>
<dbReference type="RefSeq" id="WP_012153283.1">
    <property type="nucleotide sequence ID" value="NC_009901.1"/>
</dbReference>
<dbReference type="SMR" id="A8GYE8"/>
<dbReference type="STRING" id="398579.Spea_0006"/>
<dbReference type="KEGG" id="spl:Spea_0006"/>
<dbReference type="eggNOG" id="COG0751">
    <property type="taxonomic scope" value="Bacteria"/>
</dbReference>
<dbReference type="HOGENOM" id="CLU_007220_2_2_6"/>
<dbReference type="OrthoDB" id="9775440at2"/>
<dbReference type="Proteomes" id="UP000002608">
    <property type="component" value="Chromosome"/>
</dbReference>
<dbReference type="GO" id="GO:0005829">
    <property type="term" value="C:cytosol"/>
    <property type="evidence" value="ECO:0007669"/>
    <property type="project" value="TreeGrafter"/>
</dbReference>
<dbReference type="GO" id="GO:0004814">
    <property type="term" value="F:arginine-tRNA ligase activity"/>
    <property type="evidence" value="ECO:0007669"/>
    <property type="project" value="InterPro"/>
</dbReference>
<dbReference type="GO" id="GO:0005524">
    <property type="term" value="F:ATP binding"/>
    <property type="evidence" value="ECO:0007669"/>
    <property type="project" value="UniProtKB-UniRule"/>
</dbReference>
<dbReference type="GO" id="GO:0004820">
    <property type="term" value="F:glycine-tRNA ligase activity"/>
    <property type="evidence" value="ECO:0007669"/>
    <property type="project" value="UniProtKB-UniRule"/>
</dbReference>
<dbReference type="GO" id="GO:0006420">
    <property type="term" value="P:arginyl-tRNA aminoacylation"/>
    <property type="evidence" value="ECO:0007669"/>
    <property type="project" value="InterPro"/>
</dbReference>
<dbReference type="GO" id="GO:0006426">
    <property type="term" value="P:glycyl-tRNA aminoacylation"/>
    <property type="evidence" value="ECO:0007669"/>
    <property type="project" value="UniProtKB-UniRule"/>
</dbReference>
<dbReference type="Gene3D" id="1.10.730.10">
    <property type="entry name" value="Isoleucyl-tRNA Synthetase, Domain 1"/>
    <property type="match status" value="1"/>
</dbReference>
<dbReference type="HAMAP" id="MF_00255">
    <property type="entry name" value="Gly_tRNA_synth_beta"/>
    <property type="match status" value="1"/>
</dbReference>
<dbReference type="InterPro" id="IPR008909">
    <property type="entry name" value="DALR_anticod-bd"/>
</dbReference>
<dbReference type="InterPro" id="IPR015944">
    <property type="entry name" value="Gly-tRNA-synth_bsu"/>
</dbReference>
<dbReference type="InterPro" id="IPR006194">
    <property type="entry name" value="Gly-tRNA-synth_heterodimer"/>
</dbReference>
<dbReference type="NCBIfam" id="TIGR00211">
    <property type="entry name" value="glyS"/>
    <property type="match status" value="1"/>
</dbReference>
<dbReference type="PANTHER" id="PTHR30075:SF2">
    <property type="entry name" value="GLYCINE--TRNA LIGASE, CHLOROPLASTIC_MITOCHONDRIAL 2"/>
    <property type="match status" value="1"/>
</dbReference>
<dbReference type="PANTHER" id="PTHR30075">
    <property type="entry name" value="GLYCYL-TRNA SYNTHETASE"/>
    <property type="match status" value="1"/>
</dbReference>
<dbReference type="Pfam" id="PF05746">
    <property type="entry name" value="DALR_1"/>
    <property type="match status" value="1"/>
</dbReference>
<dbReference type="Pfam" id="PF02092">
    <property type="entry name" value="tRNA_synt_2f"/>
    <property type="match status" value="1"/>
</dbReference>
<dbReference type="PRINTS" id="PR01045">
    <property type="entry name" value="TRNASYNTHGB"/>
</dbReference>
<dbReference type="SMART" id="SM00836">
    <property type="entry name" value="DALR_1"/>
    <property type="match status" value="1"/>
</dbReference>
<dbReference type="SUPFAM" id="SSF109604">
    <property type="entry name" value="HD-domain/PDEase-like"/>
    <property type="match status" value="1"/>
</dbReference>
<dbReference type="PROSITE" id="PS50861">
    <property type="entry name" value="AA_TRNA_LIGASE_II_GLYAB"/>
    <property type="match status" value="1"/>
</dbReference>
<organism>
    <name type="scientific">Shewanella pealeana (strain ATCC 700345 / ANG-SQ1)</name>
    <dbReference type="NCBI Taxonomy" id="398579"/>
    <lineage>
        <taxon>Bacteria</taxon>
        <taxon>Pseudomonadati</taxon>
        <taxon>Pseudomonadota</taxon>
        <taxon>Gammaproteobacteria</taxon>
        <taxon>Alteromonadales</taxon>
        <taxon>Shewanellaceae</taxon>
        <taxon>Shewanella</taxon>
    </lineage>
</organism>
<accession>A8GYE8</accession>
<sequence length="689" mass="75546">MNFENLLIEIGTEELPPKSLRKLAESFLANFTEELTKAELSFESAVWHAAPRRLAICINQLALAQADKVVEKRGPAVAQAFDADGNPTKAAMGWARGNGITVEQAERLKTDKGEWLLHQARVVGVETKSLIADMAQRSLDKLPIPKPMRWGSNTTQFIRPVHTVTMLLGSEVVDGELLGIKSDRIIRGHRFMGESSFKLDHADNYLVALKEKGKVLADYEARKAIIKTDAEAAAAKIGGVADLEDDLLEEVTSLVEWPVVLTASFEEKFLDVPAEALVYTMKGDQKYFPVFDNAGQLLPNFIFVTNIESKDPQQIIAGNEKVVRPRLADAEFFFETDKKDTLEARLTSLETVVFQKQLGTIKQRVERISAMAGYIATSIDANSEEAARAGLLSKSDLMTNMVMEFTDLQGTMGMHYARLNGETEAVAVALSEQYKPKFSGDTVPTAPISICVALAEKLDTLVGIFGIGQAPKGAADPFALRRAAIGVLRICLENNLPLDLVDLIAKAQELHGENLTNADVAEQVLEFFMARFRAWYQDQGVSVDVILAVLARRPTAPADFESRIKAVAHFRTLEQASALAAANKRVSNILAKVEGELPAAIDDKLLVEAAEKALAEKLAELQPQLAPLFAAANYQEALALLASLRESVDTFFEDVMVMADDEALKNNRLALLSSLREQFLHAADISLLQ</sequence>
<name>SYGB_SHEPA</name>
<proteinExistence type="inferred from homology"/>
<protein>
    <recommendedName>
        <fullName evidence="1">Glycine--tRNA ligase beta subunit</fullName>
        <ecNumber evidence="1">6.1.1.14</ecNumber>
    </recommendedName>
    <alternativeName>
        <fullName evidence="1">Glycyl-tRNA synthetase beta subunit</fullName>
        <shortName evidence="1">GlyRS</shortName>
    </alternativeName>
</protein>
<comment type="catalytic activity">
    <reaction evidence="1">
        <text>tRNA(Gly) + glycine + ATP = glycyl-tRNA(Gly) + AMP + diphosphate</text>
        <dbReference type="Rhea" id="RHEA:16013"/>
        <dbReference type="Rhea" id="RHEA-COMP:9664"/>
        <dbReference type="Rhea" id="RHEA-COMP:9683"/>
        <dbReference type="ChEBI" id="CHEBI:30616"/>
        <dbReference type="ChEBI" id="CHEBI:33019"/>
        <dbReference type="ChEBI" id="CHEBI:57305"/>
        <dbReference type="ChEBI" id="CHEBI:78442"/>
        <dbReference type="ChEBI" id="CHEBI:78522"/>
        <dbReference type="ChEBI" id="CHEBI:456215"/>
        <dbReference type="EC" id="6.1.1.14"/>
    </reaction>
</comment>
<comment type="subunit">
    <text evidence="1">Tetramer of two alpha and two beta subunits.</text>
</comment>
<comment type="subcellular location">
    <subcellularLocation>
        <location evidence="1">Cytoplasm</location>
    </subcellularLocation>
</comment>
<comment type="similarity">
    <text evidence="1">Belongs to the class-II aminoacyl-tRNA synthetase family.</text>
</comment>
<reference key="1">
    <citation type="submission" date="2007-10" db="EMBL/GenBank/DDBJ databases">
        <title>Complete sequence of Shewanella pealeana ATCC 700345.</title>
        <authorList>
            <consortium name="US DOE Joint Genome Institute"/>
            <person name="Copeland A."/>
            <person name="Lucas S."/>
            <person name="Lapidus A."/>
            <person name="Barry K."/>
            <person name="Glavina del Rio T."/>
            <person name="Dalin E."/>
            <person name="Tice H."/>
            <person name="Pitluck S."/>
            <person name="Chertkov O."/>
            <person name="Brettin T."/>
            <person name="Bruce D."/>
            <person name="Detter J.C."/>
            <person name="Han C."/>
            <person name="Schmutz J."/>
            <person name="Larimer F."/>
            <person name="Land M."/>
            <person name="Hauser L."/>
            <person name="Kyrpides N."/>
            <person name="Kim E."/>
            <person name="Zhao J.-S.Z."/>
            <person name="Manno D."/>
            <person name="Hawari J."/>
            <person name="Richardson P."/>
        </authorList>
    </citation>
    <scope>NUCLEOTIDE SEQUENCE [LARGE SCALE GENOMIC DNA]</scope>
    <source>
        <strain>ATCC 700345 / ANG-SQ1</strain>
    </source>
</reference>
<gene>
    <name evidence="1" type="primary">glyS</name>
    <name type="ordered locus">Spea_0006</name>
</gene>
<feature type="chain" id="PRO_1000078549" description="Glycine--tRNA ligase beta subunit">
    <location>
        <begin position="1"/>
        <end position="689"/>
    </location>
</feature>
<keyword id="KW-0030">Aminoacyl-tRNA synthetase</keyword>
<keyword id="KW-0067">ATP-binding</keyword>
<keyword id="KW-0963">Cytoplasm</keyword>
<keyword id="KW-0436">Ligase</keyword>
<keyword id="KW-0547">Nucleotide-binding</keyword>
<keyword id="KW-0648">Protein biosynthesis</keyword>
<keyword id="KW-1185">Reference proteome</keyword>